<dbReference type="EC" id="5.5.1.6"/>
<dbReference type="EMBL" id="D38168">
    <property type="protein sequence ID" value="BAD95484.1"/>
    <property type="molecule type" value="mRNA"/>
</dbReference>
<dbReference type="SMR" id="Q565D8"/>
<dbReference type="UniPathway" id="UPA00154"/>
<dbReference type="GO" id="GO:0045430">
    <property type="term" value="F:chalcone isomerase activity"/>
    <property type="evidence" value="ECO:0007669"/>
    <property type="project" value="UniProtKB-EC"/>
</dbReference>
<dbReference type="GO" id="GO:0009813">
    <property type="term" value="P:flavonoid biosynthetic process"/>
    <property type="evidence" value="ECO:0007669"/>
    <property type="project" value="UniProtKB-UniPathway"/>
</dbReference>
<dbReference type="Gene3D" id="1.10.890.20">
    <property type="match status" value="1"/>
</dbReference>
<dbReference type="Gene3D" id="3.50.70.10">
    <property type="match status" value="1"/>
</dbReference>
<dbReference type="InterPro" id="IPR044164">
    <property type="entry name" value="CFI"/>
</dbReference>
<dbReference type="InterPro" id="IPR016087">
    <property type="entry name" value="Chalcone_isomerase"/>
</dbReference>
<dbReference type="InterPro" id="IPR016088">
    <property type="entry name" value="Chalcone_isomerase_3-sand"/>
</dbReference>
<dbReference type="InterPro" id="IPR016089">
    <property type="entry name" value="Chalcone_isomerase_bundle_sf"/>
</dbReference>
<dbReference type="InterPro" id="IPR036298">
    <property type="entry name" value="Chalcone_isomerase_sf"/>
</dbReference>
<dbReference type="PANTHER" id="PTHR28039:SF8">
    <property type="entry name" value="CHALCONE--FLAVANONE ISOMERASE 1-RELATED"/>
    <property type="match status" value="1"/>
</dbReference>
<dbReference type="PANTHER" id="PTHR28039">
    <property type="entry name" value="CHALCONE--FLAVONONE ISOMERASE 1-RELATED"/>
    <property type="match status" value="1"/>
</dbReference>
<dbReference type="Pfam" id="PF02431">
    <property type="entry name" value="Chalcone"/>
    <property type="match status" value="1"/>
</dbReference>
<dbReference type="SUPFAM" id="SSF54626">
    <property type="entry name" value="Chalcone isomerase"/>
    <property type="match status" value="1"/>
</dbReference>
<keyword id="KW-0284">Flavonoid biosynthesis</keyword>
<keyword id="KW-0413">Isomerase</keyword>
<proteinExistence type="evidence at transcript level"/>
<sequence>MVSSSVSSVTEVKVESYVFPPSVKPPSSTKSFLLGGAGVRGLEINGNFVKFTAIGVYLEESGVAVLSGKWKGKTAEELSDSVEFFTDIITGPFEKFTQVTLILPVTGQQYSPKVAENCAAQWKAAGIYTDADGIAIEKFLQVFQTESFTPGDSILFTHSPESLTISFGKNGAIPEVSNAVIENKKLSEAVIESIIGEKGVSPAAKKSLATRIAEILNHFDA</sequence>
<evidence type="ECO:0000250" key="1"/>
<evidence type="ECO:0000269" key="2">
    <source ref="1"/>
</evidence>
<evidence type="ECO:0000305" key="3"/>
<organism>
    <name type="scientific">Gentiana triflora</name>
    <name type="common">Clustered gentian</name>
    <dbReference type="NCBI Taxonomy" id="55190"/>
    <lineage>
        <taxon>Eukaryota</taxon>
        <taxon>Viridiplantae</taxon>
        <taxon>Streptophyta</taxon>
        <taxon>Embryophyta</taxon>
        <taxon>Tracheophyta</taxon>
        <taxon>Spermatophyta</taxon>
        <taxon>Magnoliopsida</taxon>
        <taxon>eudicotyledons</taxon>
        <taxon>Gunneridae</taxon>
        <taxon>Pentapetalae</taxon>
        <taxon>asterids</taxon>
        <taxon>lamiids</taxon>
        <taxon>Gentianales</taxon>
        <taxon>Gentianaceae</taxon>
        <taxon>Gentianeae</taxon>
        <taxon>Gentianinae</taxon>
        <taxon>Gentiana</taxon>
    </lineage>
</organism>
<accession>Q565D8</accession>
<reference key="1">
    <citation type="journal article" date="2005" name="Plant Sci.">
        <title>Temporal expression of flavonoid biosynthesis-related genes regulates flower pigmentation in gentian plants.</title>
        <authorList>
            <person name="Nakatsuka T."/>
            <person name="Nishihara M."/>
            <person name="Mishiba K."/>
            <person name="Yamamura S."/>
        </authorList>
        <dbReference type="AGRICOLA" id="IND43694509"/>
    </citation>
    <scope>NUCLEOTIDE SEQUENCE [MRNA]</scope>
    <scope>TISSUE SPECIFICITY</scope>
    <scope>DEVELOPMENTAL STAGE</scope>
    <source>
        <strain>cv. Maciry</strain>
        <tissue>Petal</tissue>
    </source>
</reference>
<comment type="function">
    <text evidence="1">Catalyzes the intramolecular cyclization of bicyclic chalcones into tricyclic (S)-flavanones. Responsible for the isomerization of 4,2',4',6'-tetrahydroxychalcone (also termed chalcone) into naringenin (By similarity).</text>
</comment>
<comment type="catalytic activity">
    <reaction>
        <text>a chalcone = a flavanone.</text>
        <dbReference type="EC" id="5.5.1.6"/>
    </reaction>
</comment>
<comment type="pathway">
    <text>Secondary metabolite biosynthesis; flavonoid biosynthesis.</text>
</comment>
<comment type="tissue specificity">
    <text evidence="2">Flowers.</text>
</comment>
<comment type="developmental stage">
    <text evidence="2">Expressed in flowers during the whole flower development.</text>
</comment>
<comment type="miscellaneous">
    <text>Part of the biosynthetic pathway for all classes of flavonoids, a large class of secondary plant metabolites, many of which are brightly colored.</text>
</comment>
<comment type="similarity">
    <text evidence="3">Belongs to the chalcone isomerase family.</text>
</comment>
<feature type="chain" id="PRO_0000300838" description="Chalcone--flavanone isomerase">
    <location>
        <begin position="1"/>
        <end position="221"/>
    </location>
</feature>
<feature type="binding site" evidence="1">
    <location>
        <position position="52"/>
    </location>
    <ligand>
        <name>substrate</name>
    </ligand>
</feature>
<feature type="binding site" evidence="1">
    <location>
        <position position="117"/>
    </location>
    <ligand>
        <name>substrate</name>
    </ligand>
</feature>
<feature type="binding site" evidence="1">
    <location>
        <position position="193"/>
    </location>
    <ligand>
        <name>substrate</name>
    </ligand>
</feature>
<feature type="site" description="Important for catalytic activity" evidence="1">
    <location>
        <position position="110"/>
    </location>
</feature>
<gene>
    <name type="primary">CHI</name>
</gene>
<protein>
    <recommendedName>
        <fullName>Chalcone--flavanone isomerase</fullName>
        <shortName>Chalcone isomerase</shortName>
        <ecNumber>5.5.1.6</ecNumber>
    </recommendedName>
</protein>
<name>CFI_GENTR</name>